<reference key="1">
    <citation type="journal article" date="2008" name="DNA Res.">
        <title>Complete genome sequence of Finegoldia magna, an anaerobic opportunistic pathogen.</title>
        <authorList>
            <person name="Goto T."/>
            <person name="Yamashita A."/>
            <person name="Hirakawa H."/>
            <person name="Matsutani M."/>
            <person name="Todo K."/>
            <person name="Ohshima K."/>
            <person name="Toh H."/>
            <person name="Miyamoto K."/>
            <person name="Kuhara S."/>
            <person name="Hattori M."/>
            <person name="Shimizu T."/>
            <person name="Akimoto S."/>
        </authorList>
    </citation>
    <scope>NUCLEOTIDE SEQUENCE [LARGE SCALE GENOMIC DNA]</scope>
    <source>
        <strain>ATCC 29328 / DSM 20472 / WAL 2508</strain>
    </source>
</reference>
<feature type="chain" id="PRO_1000214758" description="Small ribosomal subunit protein uS15">
    <location>
        <begin position="1"/>
        <end position="88"/>
    </location>
</feature>
<keyword id="KW-1185">Reference proteome</keyword>
<keyword id="KW-0687">Ribonucleoprotein</keyword>
<keyword id="KW-0689">Ribosomal protein</keyword>
<keyword id="KW-0694">RNA-binding</keyword>
<keyword id="KW-0699">rRNA-binding</keyword>
<organism>
    <name type="scientific">Finegoldia magna (strain ATCC 29328 / DSM 20472 / WAL 2508)</name>
    <name type="common">Peptostreptococcus magnus</name>
    <dbReference type="NCBI Taxonomy" id="334413"/>
    <lineage>
        <taxon>Bacteria</taxon>
        <taxon>Bacillati</taxon>
        <taxon>Bacillota</taxon>
        <taxon>Tissierellia</taxon>
        <taxon>Tissierellales</taxon>
        <taxon>Peptoniphilaceae</taxon>
        <taxon>Finegoldia</taxon>
    </lineage>
</organism>
<sequence>MYNKEIKEEIIKEYQTKEGDTGSPEVQVALLTYRINYLTEHLKSHKNDHHSRRGLFKMIGKRRNLLNYLSNKDIERYRDLIKRLNIRR</sequence>
<protein>
    <recommendedName>
        <fullName evidence="1">Small ribosomal subunit protein uS15</fullName>
    </recommendedName>
    <alternativeName>
        <fullName evidence="2">30S ribosomal protein S15</fullName>
    </alternativeName>
</protein>
<proteinExistence type="inferred from homology"/>
<comment type="function">
    <text evidence="1">One of the primary rRNA binding proteins, it binds directly to 16S rRNA where it helps nucleate assembly of the platform of the 30S subunit by binding and bridging several RNA helices of the 16S rRNA.</text>
</comment>
<comment type="function">
    <text evidence="1">Forms an intersubunit bridge (bridge B4) with the 23S rRNA of the 50S subunit in the ribosome.</text>
</comment>
<comment type="subunit">
    <text evidence="1">Part of the 30S ribosomal subunit. Forms a bridge to the 50S subunit in the 70S ribosome, contacting the 23S rRNA.</text>
</comment>
<comment type="similarity">
    <text evidence="1">Belongs to the universal ribosomal protein uS15 family.</text>
</comment>
<evidence type="ECO:0000255" key="1">
    <source>
        <dbReference type="HAMAP-Rule" id="MF_01343"/>
    </source>
</evidence>
<evidence type="ECO:0000305" key="2"/>
<accession>B0S1E0</accession>
<gene>
    <name evidence="1" type="primary">rpsO</name>
    <name type="ordered locus">FMG_0762</name>
</gene>
<dbReference type="EMBL" id="AP008971">
    <property type="protein sequence ID" value="BAG08180.1"/>
    <property type="molecule type" value="Genomic_DNA"/>
</dbReference>
<dbReference type="RefSeq" id="WP_002838220.1">
    <property type="nucleotide sequence ID" value="NC_010376.1"/>
</dbReference>
<dbReference type="SMR" id="B0S1E0"/>
<dbReference type="STRING" id="334413.FMG_0762"/>
<dbReference type="GeneID" id="60840164"/>
<dbReference type="KEGG" id="fma:FMG_0762"/>
<dbReference type="eggNOG" id="COG0184">
    <property type="taxonomic scope" value="Bacteria"/>
</dbReference>
<dbReference type="HOGENOM" id="CLU_148518_0_0_9"/>
<dbReference type="Proteomes" id="UP000001319">
    <property type="component" value="Chromosome"/>
</dbReference>
<dbReference type="GO" id="GO:0022627">
    <property type="term" value="C:cytosolic small ribosomal subunit"/>
    <property type="evidence" value="ECO:0007669"/>
    <property type="project" value="TreeGrafter"/>
</dbReference>
<dbReference type="GO" id="GO:0019843">
    <property type="term" value="F:rRNA binding"/>
    <property type="evidence" value="ECO:0007669"/>
    <property type="project" value="UniProtKB-UniRule"/>
</dbReference>
<dbReference type="GO" id="GO:0003735">
    <property type="term" value="F:structural constituent of ribosome"/>
    <property type="evidence" value="ECO:0007669"/>
    <property type="project" value="InterPro"/>
</dbReference>
<dbReference type="GO" id="GO:0006412">
    <property type="term" value="P:translation"/>
    <property type="evidence" value="ECO:0007669"/>
    <property type="project" value="UniProtKB-UniRule"/>
</dbReference>
<dbReference type="CDD" id="cd00353">
    <property type="entry name" value="Ribosomal_S15p_S13e"/>
    <property type="match status" value="1"/>
</dbReference>
<dbReference type="FunFam" id="1.10.287.10:FF:000002">
    <property type="entry name" value="30S ribosomal protein S15"/>
    <property type="match status" value="1"/>
</dbReference>
<dbReference type="Gene3D" id="6.10.250.3130">
    <property type="match status" value="1"/>
</dbReference>
<dbReference type="Gene3D" id="1.10.287.10">
    <property type="entry name" value="S15/NS1, RNA-binding"/>
    <property type="match status" value="1"/>
</dbReference>
<dbReference type="HAMAP" id="MF_01343_B">
    <property type="entry name" value="Ribosomal_uS15_B"/>
    <property type="match status" value="1"/>
</dbReference>
<dbReference type="InterPro" id="IPR000589">
    <property type="entry name" value="Ribosomal_uS15"/>
</dbReference>
<dbReference type="InterPro" id="IPR005290">
    <property type="entry name" value="Ribosomal_uS15_bac-type"/>
</dbReference>
<dbReference type="InterPro" id="IPR009068">
    <property type="entry name" value="uS15_NS1_RNA-bd_sf"/>
</dbReference>
<dbReference type="NCBIfam" id="TIGR00952">
    <property type="entry name" value="S15_bact"/>
    <property type="match status" value="1"/>
</dbReference>
<dbReference type="PANTHER" id="PTHR23321">
    <property type="entry name" value="RIBOSOMAL PROTEIN S15, BACTERIAL AND ORGANELLAR"/>
    <property type="match status" value="1"/>
</dbReference>
<dbReference type="PANTHER" id="PTHR23321:SF26">
    <property type="entry name" value="SMALL RIBOSOMAL SUBUNIT PROTEIN US15M"/>
    <property type="match status" value="1"/>
</dbReference>
<dbReference type="Pfam" id="PF00312">
    <property type="entry name" value="Ribosomal_S15"/>
    <property type="match status" value="1"/>
</dbReference>
<dbReference type="SMART" id="SM01387">
    <property type="entry name" value="Ribosomal_S15"/>
    <property type="match status" value="1"/>
</dbReference>
<dbReference type="SUPFAM" id="SSF47060">
    <property type="entry name" value="S15/NS1 RNA-binding domain"/>
    <property type="match status" value="1"/>
</dbReference>
<dbReference type="PROSITE" id="PS00362">
    <property type="entry name" value="RIBOSOMAL_S15"/>
    <property type="match status" value="1"/>
</dbReference>
<name>RS15_FINM2</name>